<comment type="function">
    <text evidence="1">Catalyzes the transfer of a ribosyl phosphate group from 5-phosphoribose 1-diphosphate to orotate, leading to the formation of orotidine monophosphate (OMP).</text>
</comment>
<comment type="catalytic activity">
    <reaction evidence="1">
        <text>orotidine 5'-phosphate + diphosphate = orotate + 5-phospho-alpha-D-ribose 1-diphosphate</text>
        <dbReference type="Rhea" id="RHEA:10380"/>
        <dbReference type="ChEBI" id="CHEBI:30839"/>
        <dbReference type="ChEBI" id="CHEBI:33019"/>
        <dbReference type="ChEBI" id="CHEBI:57538"/>
        <dbReference type="ChEBI" id="CHEBI:58017"/>
        <dbReference type="EC" id="2.4.2.10"/>
    </reaction>
</comment>
<comment type="cofactor">
    <cofactor evidence="1">
        <name>Mg(2+)</name>
        <dbReference type="ChEBI" id="CHEBI:18420"/>
    </cofactor>
</comment>
<comment type="pathway">
    <text evidence="1">Pyrimidine metabolism; UMP biosynthesis via de novo pathway; UMP from orotate: step 1/2.</text>
</comment>
<comment type="subunit">
    <text evidence="1">Homodimer.</text>
</comment>
<comment type="similarity">
    <text evidence="1">Belongs to the purine/pyrimidine phosphoribosyltransferase family. PyrE subfamily.</text>
</comment>
<dbReference type="EC" id="2.4.2.10" evidence="1"/>
<dbReference type="EMBL" id="CP000728">
    <property type="protein sequence ID" value="ABS42442.1"/>
    <property type="molecule type" value="Genomic_DNA"/>
</dbReference>
<dbReference type="RefSeq" id="WP_012100981.1">
    <property type="nucleotide sequence ID" value="NC_009699.1"/>
</dbReference>
<dbReference type="SMR" id="A7GIH6"/>
<dbReference type="KEGG" id="cbf:CLI_3374"/>
<dbReference type="HOGENOM" id="CLU_074878_3_0_9"/>
<dbReference type="UniPathway" id="UPA00070">
    <property type="reaction ID" value="UER00119"/>
</dbReference>
<dbReference type="Proteomes" id="UP000002410">
    <property type="component" value="Chromosome"/>
</dbReference>
<dbReference type="GO" id="GO:0000287">
    <property type="term" value="F:magnesium ion binding"/>
    <property type="evidence" value="ECO:0007669"/>
    <property type="project" value="UniProtKB-UniRule"/>
</dbReference>
<dbReference type="GO" id="GO:0004588">
    <property type="term" value="F:orotate phosphoribosyltransferase activity"/>
    <property type="evidence" value="ECO:0007669"/>
    <property type="project" value="UniProtKB-UniRule"/>
</dbReference>
<dbReference type="GO" id="GO:0044205">
    <property type="term" value="P:'de novo' UMP biosynthetic process"/>
    <property type="evidence" value="ECO:0007669"/>
    <property type="project" value="UniProtKB-UniRule"/>
</dbReference>
<dbReference type="GO" id="GO:0019856">
    <property type="term" value="P:pyrimidine nucleobase biosynthetic process"/>
    <property type="evidence" value="ECO:0007669"/>
    <property type="project" value="InterPro"/>
</dbReference>
<dbReference type="CDD" id="cd06223">
    <property type="entry name" value="PRTases_typeI"/>
    <property type="match status" value="1"/>
</dbReference>
<dbReference type="Gene3D" id="3.40.50.2020">
    <property type="match status" value="1"/>
</dbReference>
<dbReference type="HAMAP" id="MF_01208">
    <property type="entry name" value="PyrE"/>
    <property type="match status" value="1"/>
</dbReference>
<dbReference type="InterPro" id="IPR023031">
    <property type="entry name" value="OPRT"/>
</dbReference>
<dbReference type="InterPro" id="IPR006273">
    <property type="entry name" value="Orotate_PRibTrfase_bac"/>
</dbReference>
<dbReference type="InterPro" id="IPR000836">
    <property type="entry name" value="PRibTrfase_dom"/>
</dbReference>
<dbReference type="InterPro" id="IPR029057">
    <property type="entry name" value="PRTase-like"/>
</dbReference>
<dbReference type="NCBIfam" id="TIGR01367">
    <property type="entry name" value="pyrE_Therm"/>
    <property type="match status" value="1"/>
</dbReference>
<dbReference type="PANTHER" id="PTHR19278">
    <property type="entry name" value="OROTATE PHOSPHORIBOSYLTRANSFERASE"/>
    <property type="match status" value="1"/>
</dbReference>
<dbReference type="PANTHER" id="PTHR19278:SF9">
    <property type="entry name" value="URIDINE 5'-MONOPHOSPHATE SYNTHASE"/>
    <property type="match status" value="1"/>
</dbReference>
<dbReference type="Pfam" id="PF00156">
    <property type="entry name" value="Pribosyltran"/>
    <property type="match status" value="1"/>
</dbReference>
<dbReference type="SUPFAM" id="SSF53271">
    <property type="entry name" value="PRTase-like"/>
    <property type="match status" value="1"/>
</dbReference>
<accession>A7GIH6</accession>
<gene>
    <name evidence="1" type="primary">pyrE</name>
    <name type="ordered locus">CLI_3374</name>
</gene>
<keyword id="KW-0328">Glycosyltransferase</keyword>
<keyword id="KW-0460">Magnesium</keyword>
<keyword id="KW-0665">Pyrimidine biosynthesis</keyword>
<keyword id="KW-0808">Transferase</keyword>
<evidence type="ECO:0000255" key="1">
    <source>
        <dbReference type="HAMAP-Rule" id="MF_01208"/>
    </source>
</evidence>
<proteinExistence type="inferred from homology"/>
<name>PYRE_CLOBL</name>
<feature type="chain" id="PRO_1000138780" description="Orotate phosphoribosyltransferase">
    <location>
        <begin position="1"/>
        <end position="191"/>
    </location>
</feature>
<feature type="binding site" evidence="1">
    <location>
        <begin position="114"/>
        <end position="122"/>
    </location>
    <ligand>
        <name>5-phospho-alpha-D-ribose 1-diphosphate</name>
        <dbReference type="ChEBI" id="CHEBI:58017"/>
    </ligand>
</feature>
<feature type="binding site" evidence="1">
    <location>
        <position position="118"/>
    </location>
    <ligand>
        <name>orotate</name>
        <dbReference type="ChEBI" id="CHEBI:30839"/>
    </ligand>
</feature>
<feature type="binding site" evidence="1">
    <location>
        <position position="146"/>
    </location>
    <ligand>
        <name>orotate</name>
        <dbReference type="ChEBI" id="CHEBI:30839"/>
    </ligand>
</feature>
<protein>
    <recommendedName>
        <fullName evidence="1">Orotate phosphoribosyltransferase</fullName>
        <shortName evidence="1">OPRT</shortName>
        <shortName evidence="1">OPRTase</shortName>
        <ecNumber evidence="1">2.4.2.10</ecNumber>
    </recommendedName>
</protein>
<reference key="1">
    <citation type="submission" date="2007-06" db="EMBL/GenBank/DDBJ databases">
        <authorList>
            <person name="Brinkac L.M."/>
            <person name="Daugherty S."/>
            <person name="Dodson R.J."/>
            <person name="Madupu R."/>
            <person name="Brown J.L."/>
            <person name="Bruce D."/>
            <person name="Detter C."/>
            <person name="Munk C."/>
            <person name="Smith L.A."/>
            <person name="Smith T.J."/>
            <person name="White O."/>
            <person name="Brettin T.S."/>
        </authorList>
    </citation>
    <scope>NUCLEOTIDE SEQUENCE [LARGE SCALE GENOMIC DNA]</scope>
    <source>
        <strain>Langeland / NCTC 10281 / Type F</strain>
    </source>
</reference>
<sequence length="191" mass="21242">MSNINVIDILKESDALLEGHFLLSSGRHSNRYCQCAKLLQCPQKSEKVISVIAEKLKEVDFNIIVGPAMGGVIVSYELARQTNKPGIFAERKEGVMCIRRGFEIKKGDKVIISEDVVTTGKSSLEVAKVIEEMGGEVVGIACIVDRRAEDVKTNYPIYSACKLEIETYEKDNCELCKKNIPFVKPGSREQK</sequence>
<organism>
    <name type="scientific">Clostridium botulinum (strain Langeland / NCTC 10281 / Type F)</name>
    <dbReference type="NCBI Taxonomy" id="441772"/>
    <lineage>
        <taxon>Bacteria</taxon>
        <taxon>Bacillati</taxon>
        <taxon>Bacillota</taxon>
        <taxon>Clostridia</taxon>
        <taxon>Eubacteriales</taxon>
        <taxon>Clostridiaceae</taxon>
        <taxon>Clostridium</taxon>
    </lineage>
</organism>